<evidence type="ECO:0000255" key="1">
    <source>
        <dbReference type="HAMAP-Rule" id="MF_01854"/>
    </source>
</evidence>
<evidence type="ECO:0000256" key="2">
    <source>
        <dbReference type="SAM" id="MobiDB-lite"/>
    </source>
</evidence>
<protein>
    <recommendedName>
        <fullName evidence="1">Fructose-1,6-bisphosphatase class 3</fullName>
        <shortName evidence="1">FBPase class 3</shortName>
        <ecNumber evidence="1">3.1.3.11</ecNumber>
    </recommendedName>
    <alternativeName>
        <fullName evidence="1">D-fructose-1,6-bisphosphate 1-phosphohydrolase class 3</fullName>
    </alternativeName>
</protein>
<reference key="1">
    <citation type="journal article" date="2002" name="Lancet">
        <title>Genome and virulence determinants of high virulence community-acquired MRSA.</title>
        <authorList>
            <person name="Baba T."/>
            <person name="Takeuchi F."/>
            <person name="Kuroda M."/>
            <person name="Yuzawa H."/>
            <person name="Aoki K."/>
            <person name="Oguchi A."/>
            <person name="Nagai Y."/>
            <person name="Iwama N."/>
            <person name="Asano K."/>
            <person name="Naimi T."/>
            <person name="Kuroda H."/>
            <person name="Cui L."/>
            <person name="Yamamoto K."/>
            <person name="Hiramatsu K."/>
        </authorList>
    </citation>
    <scope>NUCLEOTIDE SEQUENCE [LARGE SCALE GENOMIC DNA]</scope>
    <source>
        <strain>MW2</strain>
    </source>
</reference>
<sequence>MTQITEKELKKKYLDLLSQNFDTPEKLATEIINLESILELPKGTEHFVSDLHGEYEAFQHVLRNGSGNVRAKINDIFKERLSTKELNDLTALVYYPEDKLKLIKSDFQSCGQLNVWYITTIEHLIELIKYCSSKYTRSKLRKALPKQYVYIIEELLYKSNEYQNKKSYYETLVNQVIELKQADDLIIGLAYSVQRLVVDHLHVVGDIYDRGPQPDKIMDTLINYHSLDIQWGNHDVLWVGAYAGSKVCLANLLRICARYDNLDIIEDAYGINLRPLLTLAEKYYDADNPAFKPKKRPDKHERLTQREESQITKIHQAIAMIQFKLEIPIIKRRPNFEMEERLVLEKVNYDTNEITVYGNTYPLKDTCFQTVNRDNPAELLPEEEEVMNKLLLSFQQSEKLRRHMSFLMRKGSLYLPYNGNLLIHGCIPVDENGEMESFEIDGHTYSGQELLDVFEYHVRKSFDEKENTDDLSTDLVWYLWTGKYSSLFGKRAMTTFERYFIADKASHKEEKNPYYHLREDVNMVRKMLSDFGLNADEGRIINGHTPVKEINGEDPIKADGKMLVIDGGFSKAYQSTTGIAGYTLLYNSFGMQLVAHQQFNAKEKILSEGIDELSIKRVVDKELQRKKIRDTNIGKDLQAQIDILKMLMHDRYLD</sequence>
<accession>Q8NUT7</accession>
<dbReference type="EC" id="3.1.3.11" evidence="1"/>
<dbReference type="EMBL" id="BA000033">
    <property type="protein sequence ID" value="BAB96300.1"/>
    <property type="molecule type" value="Genomic_DNA"/>
</dbReference>
<dbReference type="RefSeq" id="WP_000192173.1">
    <property type="nucleotide sequence ID" value="NC_003923.1"/>
</dbReference>
<dbReference type="KEGG" id="sam:MW2435"/>
<dbReference type="HOGENOM" id="CLU_028392_2_0_9"/>
<dbReference type="UniPathway" id="UPA00138"/>
<dbReference type="GO" id="GO:0042132">
    <property type="term" value="F:fructose 1,6-bisphosphate 1-phosphatase activity"/>
    <property type="evidence" value="ECO:0007669"/>
    <property type="project" value="UniProtKB-UniRule"/>
</dbReference>
<dbReference type="GO" id="GO:0006094">
    <property type="term" value="P:gluconeogenesis"/>
    <property type="evidence" value="ECO:0007669"/>
    <property type="project" value="UniProtKB-UniRule"/>
</dbReference>
<dbReference type="Gene3D" id="3.60.21.10">
    <property type="match status" value="1"/>
</dbReference>
<dbReference type="HAMAP" id="MF_01854">
    <property type="entry name" value="FBPase_class3"/>
    <property type="match status" value="1"/>
</dbReference>
<dbReference type="InterPro" id="IPR009164">
    <property type="entry name" value="FBPtase_class3"/>
</dbReference>
<dbReference type="InterPro" id="IPR029052">
    <property type="entry name" value="Metallo-depent_PP-like"/>
</dbReference>
<dbReference type="Pfam" id="PF06874">
    <property type="entry name" value="FBPase_2"/>
    <property type="match status" value="1"/>
</dbReference>
<dbReference type="PIRSF" id="PIRSF000906">
    <property type="entry name" value="FBPtase_Bacill"/>
    <property type="match status" value="1"/>
</dbReference>
<dbReference type="SUPFAM" id="SSF56300">
    <property type="entry name" value="Metallo-dependent phosphatases"/>
    <property type="match status" value="2"/>
</dbReference>
<comment type="catalytic activity">
    <reaction evidence="1">
        <text>beta-D-fructose 1,6-bisphosphate + H2O = beta-D-fructose 6-phosphate + phosphate</text>
        <dbReference type="Rhea" id="RHEA:11064"/>
        <dbReference type="ChEBI" id="CHEBI:15377"/>
        <dbReference type="ChEBI" id="CHEBI:32966"/>
        <dbReference type="ChEBI" id="CHEBI:43474"/>
        <dbReference type="ChEBI" id="CHEBI:57634"/>
        <dbReference type="EC" id="3.1.3.11"/>
    </reaction>
</comment>
<comment type="cofactor">
    <cofactor evidence="1">
        <name>Mn(2+)</name>
        <dbReference type="ChEBI" id="CHEBI:29035"/>
    </cofactor>
</comment>
<comment type="pathway">
    <text evidence="1">Carbohydrate biosynthesis; gluconeogenesis.</text>
</comment>
<comment type="similarity">
    <text evidence="1">Belongs to the FBPase class 3 family.</text>
</comment>
<name>F16PC_STAAW</name>
<gene>
    <name evidence="1" type="primary">fbp</name>
    <name type="ordered locus">MW2435</name>
</gene>
<proteinExistence type="inferred from homology"/>
<keyword id="KW-0119">Carbohydrate metabolism</keyword>
<keyword id="KW-0378">Hydrolase</keyword>
<keyword id="KW-0464">Manganese</keyword>
<organism>
    <name type="scientific">Staphylococcus aureus (strain MW2)</name>
    <dbReference type="NCBI Taxonomy" id="196620"/>
    <lineage>
        <taxon>Bacteria</taxon>
        <taxon>Bacillati</taxon>
        <taxon>Bacillota</taxon>
        <taxon>Bacilli</taxon>
        <taxon>Bacillales</taxon>
        <taxon>Staphylococcaceae</taxon>
        <taxon>Staphylococcus</taxon>
    </lineage>
</organism>
<feature type="chain" id="PRO_0000359990" description="Fructose-1,6-bisphosphatase class 3">
    <location>
        <begin position="1"/>
        <end position="654"/>
    </location>
</feature>
<feature type="region of interest" description="Disordered" evidence="2">
    <location>
        <begin position="288"/>
        <end position="307"/>
    </location>
</feature>
<feature type="compositionally biased region" description="Basic and acidic residues" evidence="2">
    <location>
        <begin position="298"/>
        <end position="307"/>
    </location>
</feature>